<evidence type="ECO:0000255" key="1">
    <source>
        <dbReference type="HAMAP-Rule" id="MF_01244"/>
    </source>
</evidence>
<organism>
    <name type="scientific">Methanocella arvoryzae (strain DSM 22066 / NBRC 105507 / MRE50)</name>
    <dbReference type="NCBI Taxonomy" id="351160"/>
    <lineage>
        <taxon>Archaea</taxon>
        <taxon>Methanobacteriati</taxon>
        <taxon>Methanobacteriota</taxon>
        <taxon>Stenosarchaea group</taxon>
        <taxon>Methanomicrobia</taxon>
        <taxon>Methanocellales</taxon>
        <taxon>Methanocellaceae</taxon>
        <taxon>Methanocella</taxon>
    </lineage>
</organism>
<accession>Q0W131</accession>
<gene>
    <name evidence="1" type="primary">aroB'</name>
    <name type="ordered locus">UNCMA_03530</name>
    <name type="ORF">RRC152</name>
</gene>
<reference key="1">
    <citation type="journal article" date="2006" name="Science">
        <title>Genome of rice cluster I archaea -- the key methane producers in the rice rhizosphere.</title>
        <authorList>
            <person name="Erkel C."/>
            <person name="Kube M."/>
            <person name="Reinhardt R."/>
            <person name="Liesack W."/>
        </authorList>
    </citation>
    <scope>NUCLEOTIDE SEQUENCE [LARGE SCALE GENOMIC DNA]</scope>
    <source>
        <strain>DSM 22066 / NBRC 105507 / MRE50</strain>
    </source>
</reference>
<feature type="chain" id="PRO_1000067071" description="3-dehydroquinate synthase">
    <location>
        <begin position="1"/>
        <end position="374"/>
    </location>
</feature>
<keyword id="KW-0028">Amino-acid biosynthesis</keyword>
<keyword id="KW-0057">Aromatic amino acid biosynthesis</keyword>
<keyword id="KW-0520">NAD</keyword>
<keyword id="KW-0560">Oxidoreductase</keyword>
<keyword id="KW-1185">Reference proteome</keyword>
<protein>
    <recommendedName>
        <fullName evidence="1">3-dehydroquinate synthase</fullName>
        <shortName evidence="1">DHQ synthase</shortName>
        <ecNumber evidence="1">1.4.1.24</ecNumber>
    </recommendedName>
    <alternativeName>
        <fullName evidence="1">3-dehydroquinate synthase II</fullName>
    </alternativeName>
</protein>
<proteinExistence type="inferred from homology"/>
<comment type="function">
    <text evidence="1">Catalyzes the oxidative deamination and cyclization of 2-amino-3,7-dideoxy-D-threo-hept-6-ulosonic acid (ADH) to yield 3-dehydroquinate (DHQ), which is fed into the canonical shikimic pathway of aromatic amino acid biosynthesis.</text>
</comment>
<comment type="catalytic activity">
    <reaction evidence="1">
        <text>2-amino-2,3,7-trideoxy-D-lyxo-hept-6-ulosonate + NAD(+) + H2O = 3-dehydroquinate + NH4(+) + NADH + H(+)</text>
        <dbReference type="Rhea" id="RHEA:25956"/>
        <dbReference type="ChEBI" id="CHEBI:15377"/>
        <dbReference type="ChEBI" id="CHEBI:15378"/>
        <dbReference type="ChEBI" id="CHEBI:28938"/>
        <dbReference type="ChEBI" id="CHEBI:32364"/>
        <dbReference type="ChEBI" id="CHEBI:57540"/>
        <dbReference type="ChEBI" id="CHEBI:57945"/>
        <dbReference type="ChEBI" id="CHEBI:58859"/>
        <dbReference type="EC" id="1.4.1.24"/>
    </reaction>
</comment>
<comment type="similarity">
    <text evidence="1">Belongs to the archaeal-type DHQ synthase family.</text>
</comment>
<sequence>MSDKLVWIDAQGSWNGAKEKVTGALESGANAVLVSPENVERVRELGKMTVAAAEGNPDIRVIGIGSEGDGTLFLPHDLNSSEDMATAKALKAQGTTTAAYVRLAGKEYEQFAARMGKLCDYLIIEGDDWKVIPLENLIAELGGSGTKILAKARDIDEASVALQTLEKGADGVLVDVDDPLKVREIARAVSTKQAGLGLTPVTITAVRDAGTGDRVCIDTCSLMTPGEGMLIGNQSSGLFLVQSEAEESPYVASRPFRVNAGAVHEYVLVGEKTRYLSELASGDPALIVTRDGDARKATIGRVKIERRPLLYVEAETGDRKISAILQNAETIKLVAADGSSTPVTALKPGDRVLAKLEKEARHFGMKIEETIVEK</sequence>
<name>DHQS_METAR</name>
<dbReference type="EC" id="1.4.1.24" evidence="1"/>
<dbReference type="EMBL" id="AM114193">
    <property type="protein sequence ID" value="CAJ37912.1"/>
    <property type="molecule type" value="Genomic_DNA"/>
</dbReference>
<dbReference type="RefSeq" id="WP_012034682.1">
    <property type="nucleotide sequence ID" value="NC_009464.1"/>
</dbReference>
<dbReference type="STRING" id="351160.RRC152"/>
<dbReference type="GeneID" id="5145217"/>
<dbReference type="KEGG" id="rci:RRC152"/>
<dbReference type="PATRIC" id="fig|351160.9.peg.371"/>
<dbReference type="eggNOG" id="arCOG04353">
    <property type="taxonomic scope" value="Archaea"/>
</dbReference>
<dbReference type="OrthoDB" id="10265at2157"/>
<dbReference type="Proteomes" id="UP000000663">
    <property type="component" value="Chromosome"/>
</dbReference>
<dbReference type="GO" id="GO:0003856">
    <property type="term" value="F:3-dehydroquinate synthase activity"/>
    <property type="evidence" value="ECO:0007669"/>
    <property type="project" value="InterPro"/>
</dbReference>
<dbReference type="GO" id="GO:0102042">
    <property type="term" value="F:dehydroquinate synthase activity"/>
    <property type="evidence" value="ECO:0007669"/>
    <property type="project" value="UniProtKB-EC"/>
</dbReference>
<dbReference type="GO" id="GO:0051287">
    <property type="term" value="F:NAD binding"/>
    <property type="evidence" value="ECO:0007669"/>
    <property type="project" value="UniProtKB-UniRule"/>
</dbReference>
<dbReference type="GO" id="GO:0008652">
    <property type="term" value="P:amino acid biosynthetic process"/>
    <property type="evidence" value="ECO:0007669"/>
    <property type="project" value="UniProtKB-KW"/>
</dbReference>
<dbReference type="GO" id="GO:0009073">
    <property type="term" value="P:aromatic amino acid family biosynthetic process"/>
    <property type="evidence" value="ECO:0007669"/>
    <property type="project" value="UniProtKB-UniRule"/>
</dbReference>
<dbReference type="HAMAP" id="MF_01244">
    <property type="entry name" value="Arch_DHQ_synthase"/>
    <property type="match status" value="1"/>
</dbReference>
<dbReference type="InterPro" id="IPR002812">
    <property type="entry name" value="DHQ_synth"/>
</dbReference>
<dbReference type="NCBIfam" id="NF002626">
    <property type="entry name" value="PRK02290.1-4"/>
    <property type="match status" value="1"/>
</dbReference>
<dbReference type="PANTHER" id="PTHR33563">
    <property type="match status" value="1"/>
</dbReference>
<dbReference type="PANTHER" id="PTHR33563:SF1">
    <property type="entry name" value="3-DEHYDROQUINATE SYNTHASE"/>
    <property type="match status" value="1"/>
</dbReference>
<dbReference type="Pfam" id="PF01959">
    <property type="entry name" value="DHQS"/>
    <property type="match status" value="1"/>
</dbReference>
<dbReference type="PIRSF" id="PIRSF006655">
    <property type="entry name" value="DHQ_synth"/>
    <property type="match status" value="1"/>
</dbReference>